<sequence>MSKSHAAYIDYALRRTTNMPVEMMGTDVVRLKDYQHFVARVFLGLDSMHSLLLFHETGVGKTMTTVYILKHLKDIYTNWAIILLVKKALIEDPWMNTILRYAPEITKDCIFINYDDQNFRNKFFTNIKTINSKSRICVIIDECHNFISKSLIKEDGKIRPTRSVYNFLSKTIALKNHKMICLSATPIVNSVQEFTMLVNLLRPGSLQHQSLFENKRLVNEKELVSKLGGLCSYIVNNEFSIFDDVEGSASFAKKTVLMRYVNMSKKQEEIYQKAKLTEIKTGISSFRILRRMATTFTFDSFPERQNRDPGEYAQEIATLYNDFKRSLRDREFSKSALDTFKKGELLGGDASAADISLFTELKEKSAKFIDVCLGILASHGKCLVFEPFVNQSGIEILLLYFKVFGISNIEFSSRTKDTRIKAVAEFNQESNTNGECIKTCVFSSSGGEGISFFSINDIFILDMTWNEASLRQIVGRAIRLNSHVLTPPERRYVNVHFIMARLSNGMPTVDEDLFEIIQSKSKEFVQLFRVFKHTSLEWIHANEKDFSPIDNESGWKTLVSRAIDLSSKKNITNKLIEGTNIWYSNSNRLMSINRGFKGVDGRVYDVDGNYLHDMPDNPVIKIHDGKLIYIF</sequence>
<name>NTP1_VARV</name>
<organism>
    <name type="scientific">Variola virus</name>
    <dbReference type="NCBI Taxonomy" id="10255"/>
    <lineage>
        <taxon>Viruses</taxon>
        <taxon>Varidnaviria</taxon>
        <taxon>Bamfordvirae</taxon>
        <taxon>Nucleocytoviricota</taxon>
        <taxon>Pokkesviricetes</taxon>
        <taxon>Chitovirales</taxon>
        <taxon>Poxviridae</taxon>
        <taxon>Chordopoxvirinae</taxon>
        <taxon>Orthopoxvirus</taxon>
    </lineage>
</organism>
<proteinExistence type="inferred from homology"/>
<feature type="chain" id="PRO_0000448133" description="Nucleoside triphosphatase I">
    <location>
        <begin position="1"/>
        <end position="631"/>
    </location>
</feature>
<feature type="domain" description="Helicase ATP-binding" evidence="3">
    <location>
        <begin position="42"/>
        <end position="204"/>
    </location>
</feature>
<feature type="domain" description="Helicase C-terminal" evidence="4">
    <location>
        <begin position="367"/>
        <end position="532"/>
    </location>
</feature>
<feature type="region of interest" description="Binding to the cap-specific mRNA (nucleoside-2'-O-)-methyltransferase" evidence="1">
    <location>
        <begin position="457"/>
        <end position="524"/>
    </location>
</feature>
<feature type="short sequence motif" description="DEXH box">
    <location>
        <begin position="141"/>
        <end position="144"/>
    </location>
</feature>
<feature type="binding site" evidence="3">
    <location>
        <begin position="55"/>
        <end position="62"/>
    </location>
    <ligand>
        <name>ATP</name>
        <dbReference type="ChEBI" id="CHEBI:30616"/>
    </ligand>
</feature>
<feature type="sequence variant" description="In strain: Garcia-1966.">
    <original>E</original>
    <variation>K</variation>
    <location>
        <position position="331"/>
    </location>
</feature>
<feature type="sequence variant" description="In strain: Garcia-1966.">
    <original>E</original>
    <variation>K</variation>
    <location>
        <position position="577"/>
    </location>
</feature>
<evidence type="ECO:0000250" key="1"/>
<evidence type="ECO:0000250" key="2">
    <source>
        <dbReference type="UniProtKB" id="P05807"/>
    </source>
</evidence>
<evidence type="ECO:0000255" key="3">
    <source>
        <dbReference type="PROSITE-ProRule" id="PRU00541"/>
    </source>
</evidence>
<evidence type="ECO:0000255" key="4">
    <source>
        <dbReference type="PROSITE-ProRule" id="PRU00542"/>
    </source>
</evidence>
<evidence type="ECO:0000305" key="5"/>
<keyword id="KW-0067">ATP-binding</keyword>
<keyword id="KW-0238">DNA-binding</keyword>
<keyword id="KW-0378">Hydrolase</keyword>
<keyword id="KW-0426">Late protein</keyword>
<keyword id="KW-0547">Nucleotide-binding</keyword>
<keyword id="KW-0804">Transcription</keyword>
<keyword id="KW-0946">Virion</keyword>
<organismHost>
    <name type="scientific">Homo sapiens</name>
    <name type="common">Human</name>
    <dbReference type="NCBI Taxonomy" id="9606"/>
</organismHost>
<dbReference type="EC" id="3.6.1.15"/>
<dbReference type="EMBL" id="L22579">
    <property type="protein sequence ID" value="AAA60849.1"/>
    <property type="molecule type" value="Genomic_DNA"/>
</dbReference>
<dbReference type="EMBL" id="Y16780">
    <property type="protein sequence ID" value="CAB54701.1"/>
    <property type="molecule type" value="Genomic_DNA"/>
</dbReference>
<dbReference type="PIR" id="T28539">
    <property type="entry name" value="T28539"/>
</dbReference>
<dbReference type="RefSeq" id="NP_042145.1">
    <property type="nucleotide sequence ID" value="NC_001611.1"/>
</dbReference>
<dbReference type="SMR" id="P0DOQ4"/>
<dbReference type="GeneID" id="1486475"/>
<dbReference type="KEGG" id="vg:1486475"/>
<dbReference type="Proteomes" id="UP000111493">
    <property type="component" value="Segment"/>
</dbReference>
<dbReference type="Proteomes" id="UP000119805">
    <property type="component" value="Segment"/>
</dbReference>
<dbReference type="GO" id="GO:0044423">
    <property type="term" value="C:virion component"/>
    <property type="evidence" value="ECO:0007669"/>
    <property type="project" value="UniProtKB-KW"/>
</dbReference>
<dbReference type="GO" id="GO:0005524">
    <property type="term" value="F:ATP binding"/>
    <property type="evidence" value="ECO:0007669"/>
    <property type="project" value="UniProtKB-KW"/>
</dbReference>
<dbReference type="GO" id="GO:0003677">
    <property type="term" value="F:DNA binding"/>
    <property type="evidence" value="ECO:0007669"/>
    <property type="project" value="UniProtKB-KW"/>
</dbReference>
<dbReference type="GO" id="GO:0017111">
    <property type="term" value="F:ribonucleoside triphosphate phosphatase activity"/>
    <property type="evidence" value="ECO:0007669"/>
    <property type="project" value="UniProtKB-EC"/>
</dbReference>
<dbReference type="GO" id="GO:0006351">
    <property type="term" value="P:DNA-templated transcription"/>
    <property type="evidence" value="ECO:0007669"/>
    <property type="project" value="InterPro"/>
</dbReference>
<dbReference type="CDD" id="cd18785">
    <property type="entry name" value="SF2_C"/>
    <property type="match status" value="1"/>
</dbReference>
<dbReference type="Gene3D" id="3.40.50.300">
    <property type="entry name" value="P-loop containing nucleotide triphosphate hydrolases"/>
    <property type="match status" value="2"/>
</dbReference>
<dbReference type="InterPro" id="IPR014001">
    <property type="entry name" value="Helicase_ATP-bd"/>
</dbReference>
<dbReference type="InterPro" id="IPR001650">
    <property type="entry name" value="Helicase_C-like"/>
</dbReference>
<dbReference type="InterPro" id="IPR013676">
    <property type="entry name" value="NPHI_C"/>
</dbReference>
<dbReference type="InterPro" id="IPR027417">
    <property type="entry name" value="P-loop_NTPase"/>
</dbReference>
<dbReference type="InterPro" id="IPR000330">
    <property type="entry name" value="SNF2_N"/>
</dbReference>
<dbReference type="PANTHER" id="PTHR10799">
    <property type="entry name" value="SNF2/RAD54 HELICASE FAMILY"/>
    <property type="match status" value="1"/>
</dbReference>
<dbReference type="Pfam" id="PF00271">
    <property type="entry name" value="Helicase_C"/>
    <property type="match status" value="1"/>
</dbReference>
<dbReference type="Pfam" id="PF08469">
    <property type="entry name" value="NPHI_C"/>
    <property type="match status" value="1"/>
</dbReference>
<dbReference type="Pfam" id="PF00176">
    <property type="entry name" value="SNF2-rel_dom"/>
    <property type="match status" value="1"/>
</dbReference>
<dbReference type="SMART" id="SM00487">
    <property type="entry name" value="DEXDc"/>
    <property type="match status" value="1"/>
</dbReference>
<dbReference type="SMART" id="SM00490">
    <property type="entry name" value="HELICc"/>
    <property type="match status" value="1"/>
</dbReference>
<dbReference type="SUPFAM" id="SSF52540">
    <property type="entry name" value="P-loop containing nucleoside triphosphate hydrolases"/>
    <property type="match status" value="2"/>
</dbReference>
<dbReference type="PROSITE" id="PS51192">
    <property type="entry name" value="HELICASE_ATP_BIND_1"/>
    <property type="match status" value="1"/>
</dbReference>
<dbReference type="PROSITE" id="PS51194">
    <property type="entry name" value="HELICASE_CTER"/>
    <property type="match status" value="1"/>
</dbReference>
<reference key="1">
    <citation type="journal article" date="1993" name="Nature">
        <title>Potential virulence determinants in terminal regions of variola smallpox virus genome.</title>
        <authorList>
            <person name="Massung R.F."/>
            <person name="Esposito J.J."/>
            <person name="Liu L.I."/>
            <person name="Qi J."/>
            <person name="Utterback T.R."/>
            <person name="Knight J.C."/>
            <person name="Aubin L."/>
            <person name="Yuran T.E."/>
            <person name="Parsons J.M."/>
            <person name="Loparev V.N."/>
            <person name="Selivanov N.A."/>
            <person name="Cavallaro K.F."/>
            <person name="Kerlavage A.R."/>
            <person name="Mahy B.W.J."/>
            <person name="Venter J.C."/>
        </authorList>
    </citation>
    <scope>NUCLEOTIDE SEQUENCE [GENOMIC DNA]</scope>
    <source>
        <strain>Bangladesh-1975</strain>
    </source>
</reference>
<reference key="2">
    <citation type="journal article" date="2000" name="Virology">
        <title>Alastrim smallpox variola minor virus genome DNA sequences.</title>
        <authorList>
            <person name="Shchelkunov S.N."/>
            <person name="Totmenin A.V."/>
            <person name="Loparev V.N."/>
            <person name="Safronov P.F."/>
            <person name="Gutorov V.V."/>
            <person name="Chizhikov V.E."/>
            <person name="Knight J.C."/>
            <person name="Parsons J.M."/>
            <person name="Massung R.F."/>
            <person name="Esposito J.J."/>
        </authorList>
    </citation>
    <scope>NUCLEOTIDE SEQUENCE [LARGE SCALE GENOMIC DNA]</scope>
    <source>
        <strain>Garcia-1966</strain>
    </source>
</reference>
<protein>
    <recommendedName>
        <fullName>Nucleoside triphosphatase I</fullName>
        <ecNumber>3.6.1.15</ecNumber>
    </recommendedName>
    <alternativeName>
        <fullName>NPH-I</fullName>
    </alternativeName>
    <alternativeName>
        <fullName>Nucleoside triphosphate phosphohydrolase I</fullName>
        <shortName>NPH I</shortName>
    </alternativeName>
</protein>
<comment type="function">
    <text evidence="2">DNA-dependent ATPase that acts as a 5' to 3' translocase on single-stranded DNA and thereby plays a role in transcription termination of viral early genes. Uses forward translocation in concert with the viral RNA polymerase RAP94/OPG109 subunit and the capping enzyme/VTF to catalyze release of UUUUUNU-containing nascent RNA from the elongation complex. In addition, acts as a positive elongation factor to assist transcription through problematic sequences.</text>
</comment>
<comment type="catalytic activity">
    <reaction evidence="2">
        <text>a ribonucleoside 5'-triphosphate + H2O = a ribonucleoside 5'-diphosphate + phosphate + H(+)</text>
        <dbReference type="Rhea" id="RHEA:23680"/>
        <dbReference type="ChEBI" id="CHEBI:15377"/>
        <dbReference type="ChEBI" id="CHEBI:15378"/>
        <dbReference type="ChEBI" id="CHEBI:43474"/>
        <dbReference type="ChEBI" id="CHEBI:57930"/>
        <dbReference type="ChEBI" id="CHEBI:61557"/>
        <dbReference type="EC" id="3.6.1.15"/>
    </reaction>
</comment>
<comment type="subunit">
    <text evidence="2">Monomer. Interacts (via C-terminus) with RAP94/OPG109 (via N-terminus). Interacts with the cap-specific mRNA (nucleoside-2'-O-)-methyltransferase OPG102.</text>
</comment>
<comment type="subcellular location">
    <subcellularLocation>
        <location evidence="2">Virion</location>
    </subcellularLocation>
    <text evidence="2">Virion core enzyme.</text>
</comment>
<comment type="similarity">
    <text evidence="5">Belongs to the helicase family. NPH I subfamily.</text>
</comment>
<gene>
    <name type="primary">OPG123</name>
    <name type="synonym">NPH1</name>
    <name type="ORF">D11L</name>
    <name type="ORF">N1L</name>
</gene>
<accession>P0DOQ4</accession>
<accession>P33066</accession>
<accession>Q9QNI4</accession>